<gene>
    <name evidence="1" type="primary">petN</name>
</gene>
<dbReference type="EMBL" id="DQ887676">
    <property type="protein sequence ID" value="ABH88290.1"/>
    <property type="molecule type" value="Genomic_DNA"/>
</dbReference>
<dbReference type="RefSeq" id="YP_784379.1">
    <property type="nucleotide sequence ID" value="NC_008456.1"/>
</dbReference>
<dbReference type="SMR" id="Q06H04"/>
<dbReference type="GeneID" id="4363506"/>
<dbReference type="GO" id="GO:0009535">
    <property type="term" value="C:chloroplast thylakoid membrane"/>
    <property type="evidence" value="ECO:0007669"/>
    <property type="project" value="UniProtKB-SubCell"/>
</dbReference>
<dbReference type="GO" id="GO:0009512">
    <property type="term" value="C:cytochrome b6f complex"/>
    <property type="evidence" value="ECO:0007669"/>
    <property type="project" value="InterPro"/>
</dbReference>
<dbReference type="GO" id="GO:0045158">
    <property type="term" value="F:electron transporter, transferring electrons within cytochrome b6/f complex of photosystem II activity"/>
    <property type="evidence" value="ECO:0007669"/>
    <property type="project" value="InterPro"/>
</dbReference>
<dbReference type="GO" id="GO:0017004">
    <property type="term" value="P:cytochrome complex assembly"/>
    <property type="evidence" value="ECO:0007669"/>
    <property type="project" value="UniProtKB-UniRule"/>
</dbReference>
<dbReference type="GO" id="GO:0015979">
    <property type="term" value="P:photosynthesis"/>
    <property type="evidence" value="ECO:0007669"/>
    <property type="project" value="UniProtKB-KW"/>
</dbReference>
<dbReference type="HAMAP" id="MF_00395">
    <property type="entry name" value="Cytb6_f_PetN"/>
    <property type="match status" value="1"/>
</dbReference>
<dbReference type="InterPro" id="IPR036143">
    <property type="entry name" value="Cytochr_b6-f_cplx_su8_sf"/>
</dbReference>
<dbReference type="InterPro" id="IPR005497">
    <property type="entry name" value="Cytochrome_b6-f_cplx_su8"/>
</dbReference>
<dbReference type="Pfam" id="PF03742">
    <property type="entry name" value="PetN"/>
    <property type="match status" value="1"/>
</dbReference>
<dbReference type="SUPFAM" id="SSF103451">
    <property type="entry name" value="PetN subunit of the cytochrome b6f complex"/>
    <property type="match status" value="1"/>
</dbReference>
<geneLocation type="chloroplast"/>
<comment type="function">
    <text evidence="1">Component of the cytochrome b6-f complex, which mediates electron transfer between photosystem II (PSII) and photosystem I (PSI), cyclic electron flow around PSI, and state transitions.</text>
</comment>
<comment type="subunit">
    <text evidence="1">The 4 large subunits of the cytochrome b6-f complex are cytochrome b6, subunit IV (17 kDa polypeptide, PetD), cytochrome f and the Rieske protein, while the 4 small subunits are PetG, PetL, PetM and PetN. The complex functions as a dimer.</text>
</comment>
<comment type="subcellular location">
    <subcellularLocation>
        <location>Plastid</location>
        <location>Chloroplast thylakoid membrane</location>
        <topology>Single-pass membrane protein</topology>
    </subcellularLocation>
</comment>
<comment type="similarity">
    <text evidence="1">Belongs to the PetN family.</text>
</comment>
<proteinExistence type="inferred from homology"/>
<accession>Q06H04</accession>
<sequence length="29" mass="3198">MDIVSLAWAVLMVVFTFSLSLVVWGRSGL</sequence>
<reference key="1">
    <citation type="journal article" date="2006" name="BMC Evol. Biol.">
        <title>Complete plastid genome sequences of Drimys, Liriodendron, and Piper: implications for the phylogenetic relationships of magnoliids.</title>
        <authorList>
            <person name="Cai Z."/>
            <person name="Penaflor C."/>
            <person name="Kuehl J.V."/>
            <person name="Leebens-Mack J."/>
            <person name="Carlson J.E."/>
            <person name="dePamphilis C.W."/>
            <person name="Boore J.L."/>
            <person name="Jansen R.K."/>
        </authorList>
    </citation>
    <scope>NUCLEOTIDE SEQUENCE [LARGE SCALE GENOMIC DNA]</scope>
</reference>
<organism>
    <name type="scientific">Drimys granadensis</name>
    <dbReference type="NCBI Taxonomy" id="224735"/>
    <lineage>
        <taxon>Eukaryota</taxon>
        <taxon>Viridiplantae</taxon>
        <taxon>Streptophyta</taxon>
        <taxon>Embryophyta</taxon>
        <taxon>Tracheophyta</taxon>
        <taxon>Spermatophyta</taxon>
        <taxon>Magnoliopsida</taxon>
        <taxon>Magnoliidae</taxon>
        <taxon>Canellales</taxon>
        <taxon>Winteraceae</taxon>
        <taxon>Drimys</taxon>
    </lineage>
</organism>
<feature type="chain" id="PRO_0000275549" description="Cytochrome b6-f complex subunit 8">
    <location>
        <begin position="1"/>
        <end position="29"/>
    </location>
</feature>
<feature type="transmembrane region" description="Helical" evidence="1">
    <location>
        <begin position="3"/>
        <end position="23"/>
    </location>
</feature>
<protein>
    <recommendedName>
        <fullName evidence="1">Cytochrome b6-f complex subunit 8</fullName>
    </recommendedName>
    <alternativeName>
        <fullName evidence="1">Cytochrome b6-f complex subunit PetN</fullName>
    </alternativeName>
    <alternativeName>
        <fullName evidence="1">Cytochrome b6-f complex subunit VIII</fullName>
    </alternativeName>
</protein>
<name>PETN_DRIGR</name>
<evidence type="ECO:0000255" key="1">
    <source>
        <dbReference type="HAMAP-Rule" id="MF_00395"/>
    </source>
</evidence>
<keyword id="KW-0150">Chloroplast</keyword>
<keyword id="KW-0249">Electron transport</keyword>
<keyword id="KW-0472">Membrane</keyword>
<keyword id="KW-0602">Photosynthesis</keyword>
<keyword id="KW-0934">Plastid</keyword>
<keyword id="KW-0793">Thylakoid</keyword>
<keyword id="KW-0812">Transmembrane</keyword>
<keyword id="KW-1133">Transmembrane helix</keyword>
<keyword id="KW-0813">Transport</keyword>